<comment type="function">
    <text evidence="1">Uridine diphosphate-N-acetylglucosamine (UDP-GlcNAc) transporter in the Golgi apparatus. May supply UDP-GlcNAc as substrate for Golgi-resident glycosyltransferases that generate branching of diantennary oligosaccharides (By similarity).</text>
</comment>
<comment type="subunit">
    <text evidence="1">Interacts with SLC35A2; the interaction is reduced in the presence of SLC35A4 (By similarity). Found in a complex with SLC35A2 and SLC35A4 (By similarity).</text>
</comment>
<comment type="subcellular location">
    <subcellularLocation>
        <location evidence="1">Golgi apparatus membrane</location>
        <topology evidence="2">Multi-pass membrane protein</topology>
    </subcellularLocation>
</comment>
<comment type="similarity">
    <text evidence="3">Belongs to the nucleotide-sugar transporter family. SLC35A subfamily.</text>
</comment>
<sequence>MSTNLKYLSLGILVFQTTSLVLTMRYSRTLKEEGPRYLSSTAVVVAELLKIMACILLVYKDSKCSLRALNRILHDEILNKPMETLKLAIPSGIYTLQNNLLYVALSNLDAATYQVTYQLKILTTALFSVSMLSKKLGVYQWLSLVILMTGVAFVQWPSDSQELDSKELSAGSQFVGLMAVLTACFSSGFAGVYFEKILKETKQSVWIRNIQLGFFGSIFGLMGVYIYDGELVSKNGFFQGYNRLTWIVVILQALGGLVIAAVIKYADNILKGFATSLSIILSTLISYFWLQDFVPTSVFFLGAILVITATFLYGYDPKPTGNPTKA</sequence>
<reference key="1">
    <citation type="journal article" date="1998" name="Proc. Natl. Acad. Sci. U.S.A.">
        <title>Mammalian Golgi apparatus UDP-N-acetylglucosamine transporter: molecular cloning by phenotypic correction of a yeast mutant.</title>
        <authorList>
            <person name="Guillen E."/>
            <person name="Abeijon C."/>
            <person name="Hirschberg C.B."/>
        </authorList>
    </citation>
    <scope>NUCLEOTIDE SEQUENCE [MRNA]</scope>
</reference>
<feature type="chain" id="PRO_0000213356" description="UDP-N-acetylglucosamine transporter">
    <location>
        <begin position="1"/>
        <end position="326"/>
    </location>
</feature>
<feature type="transmembrane region" description="Helical" evidence="2">
    <location>
        <begin position="8"/>
        <end position="24"/>
    </location>
</feature>
<feature type="transmembrane region" description="Helical" evidence="2">
    <location>
        <begin position="42"/>
        <end position="58"/>
    </location>
</feature>
<feature type="transmembrane region" description="Helical" evidence="2">
    <location>
        <begin position="138"/>
        <end position="154"/>
    </location>
</feature>
<feature type="transmembrane region" description="Helical" evidence="2">
    <location>
        <begin position="174"/>
        <end position="190"/>
    </location>
</feature>
<feature type="transmembrane region" description="Helical" evidence="2">
    <location>
        <begin position="210"/>
        <end position="226"/>
    </location>
</feature>
<feature type="transmembrane region" description="Helical" evidence="2">
    <location>
        <begin position="247"/>
        <end position="263"/>
    </location>
</feature>
<feature type="transmembrane region" description="Helical" evidence="2">
    <location>
        <begin position="269"/>
        <end position="285"/>
    </location>
</feature>
<feature type="transmembrane region" description="Helical" evidence="2">
    <location>
        <begin position="296"/>
        <end position="312"/>
    </location>
</feature>
<proteinExistence type="evidence at transcript level"/>
<name>S35A3_CANLF</name>
<dbReference type="EMBL" id="AF057365">
    <property type="protein sequence ID" value="AAC39260.1"/>
    <property type="molecule type" value="mRNA"/>
</dbReference>
<dbReference type="RefSeq" id="NP_001003385.1">
    <property type="nucleotide sequence ID" value="NM_001003385.1"/>
</dbReference>
<dbReference type="SMR" id="O77592"/>
<dbReference type="FunCoup" id="O77592">
    <property type="interactions" value="569"/>
</dbReference>
<dbReference type="STRING" id="9615.ENSCAFP00000048381"/>
<dbReference type="PaxDb" id="9612-ENSCAFP00000029677"/>
<dbReference type="Ensembl" id="ENSCAFT00030030636.1">
    <property type="protein sequence ID" value="ENSCAFP00030026721.1"/>
    <property type="gene ID" value="ENSCAFG00030016487.1"/>
</dbReference>
<dbReference type="Ensembl" id="ENSCAFT00845024146.1">
    <property type="protein sequence ID" value="ENSCAFP00845018964.1"/>
    <property type="gene ID" value="ENSCAFG00845013522.1"/>
</dbReference>
<dbReference type="GeneID" id="442991"/>
<dbReference type="KEGG" id="cfa:442991"/>
<dbReference type="CTD" id="23443"/>
<dbReference type="VEuPathDB" id="HostDB:ENSCAFG00845013522"/>
<dbReference type="eggNOG" id="KOG2234">
    <property type="taxonomic scope" value="Eukaryota"/>
</dbReference>
<dbReference type="GeneTree" id="ENSGT00950000182827"/>
<dbReference type="HOGENOM" id="CLU_024645_1_0_1"/>
<dbReference type="InParanoid" id="O77592"/>
<dbReference type="OrthoDB" id="408493at2759"/>
<dbReference type="Reactome" id="R-CFA-727802">
    <property type="pathway name" value="Transport of nucleotide sugars"/>
</dbReference>
<dbReference type="Proteomes" id="UP000002254">
    <property type="component" value="Unplaced"/>
</dbReference>
<dbReference type="Proteomes" id="UP000694429">
    <property type="component" value="Chromosome 6"/>
</dbReference>
<dbReference type="Proteomes" id="UP000694542">
    <property type="component" value="Unplaced"/>
</dbReference>
<dbReference type="Proteomes" id="UP000805418">
    <property type="component" value="Chromosome 6"/>
</dbReference>
<dbReference type="GO" id="GO:0005794">
    <property type="term" value="C:Golgi apparatus"/>
    <property type="evidence" value="ECO:0000314"/>
    <property type="project" value="CACAO"/>
</dbReference>
<dbReference type="GO" id="GO:0000139">
    <property type="term" value="C:Golgi membrane"/>
    <property type="evidence" value="ECO:0000250"/>
    <property type="project" value="UniProtKB"/>
</dbReference>
<dbReference type="GO" id="GO:0005459">
    <property type="term" value="F:UDP-galactose transmembrane transporter activity"/>
    <property type="evidence" value="ECO:0000318"/>
    <property type="project" value="GO_Central"/>
</dbReference>
<dbReference type="GO" id="GO:0055085">
    <property type="term" value="P:transmembrane transport"/>
    <property type="evidence" value="ECO:0000318"/>
    <property type="project" value="GO_Central"/>
</dbReference>
<dbReference type="GO" id="GO:1990569">
    <property type="term" value="P:UDP-N-acetylglucosamine transmembrane transport"/>
    <property type="evidence" value="ECO:0000250"/>
    <property type="project" value="UniProtKB"/>
</dbReference>
<dbReference type="FunFam" id="1.10.3730.20:FF:000037">
    <property type="entry name" value="Nucleotide Sugar TransPorter family"/>
    <property type="match status" value="1"/>
</dbReference>
<dbReference type="InterPro" id="IPR007271">
    <property type="entry name" value="Nuc_sug_transpt"/>
</dbReference>
<dbReference type="NCBIfam" id="TIGR00803">
    <property type="entry name" value="nst"/>
    <property type="match status" value="1"/>
</dbReference>
<dbReference type="PANTHER" id="PTHR10231">
    <property type="entry name" value="NUCLEOTIDE-SUGAR TRANSMEMBRANE TRANSPORTER"/>
    <property type="match status" value="1"/>
</dbReference>
<dbReference type="Pfam" id="PF04142">
    <property type="entry name" value="Nuc_sug_transp"/>
    <property type="match status" value="1"/>
</dbReference>
<dbReference type="PIRSF" id="PIRSF005799">
    <property type="entry name" value="UDP-gal_transpt"/>
    <property type="match status" value="1"/>
</dbReference>
<dbReference type="SUPFAM" id="SSF103481">
    <property type="entry name" value="Multidrug resistance efflux transporter EmrE"/>
    <property type="match status" value="1"/>
</dbReference>
<gene>
    <name type="primary">SLC35A3</name>
</gene>
<protein>
    <recommendedName>
        <fullName>UDP-N-acetylglucosamine transporter</fullName>
    </recommendedName>
    <alternativeName>
        <fullName>Golgi UDP-GlcNAc transporter</fullName>
    </alternativeName>
    <alternativeName>
        <fullName>Solute carrier family 35 member A3</fullName>
    </alternativeName>
</protein>
<keyword id="KW-0333">Golgi apparatus</keyword>
<keyword id="KW-0472">Membrane</keyword>
<keyword id="KW-1185">Reference proteome</keyword>
<keyword id="KW-0762">Sugar transport</keyword>
<keyword id="KW-0812">Transmembrane</keyword>
<keyword id="KW-1133">Transmembrane helix</keyword>
<keyword id="KW-0813">Transport</keyword>
<accession>O77592</accession>
<organism>
    <name type="scientific">Canis lupus familiaris</name>
    <name type="common">Dog</name>
    <name type="synonym">Canis familiaris</name>
    <dbReference type="NCBI Taxonomy" id="9615"/>
    <lineage>
        <taxon>Eukaryota</taxon>
        <taxon>Metazoa</taxon>
        <taxon>Chordata</taxon>
        <taxon>Craniata</taxon>
        <taxon>Vertebrata</taxon>
        <taxon>Euteleostomi</taxon>
        <taxon>Mammalia</taxon>
        <taxon>Eutheria</taxon>
        <taxon>Laurasiatheria</taxon>
        <taxon>Carnivora</taxon>
        <taxon>Caniformia</taxon>
        <taxon>Canidae</taxon>
        <taxon>Canis</taxon>
    </lineage>
</organism>
<evidence type="ECO:0000250" key="1">
    <source>
        <dbReference type="UniProtKB" id="Q9Y2D2"/>
    </source>
</evidence>
<evidence type="ECO:0000255" key="2"/>
<evidence type="ECO:0000305" key="3"/>